<sequence length="192" mass="20572">MSEYLLLLIGTVLVNNFVLVKFLGLCPFMGVSSKLESAIGMSMATTFVLTLASILSYLVNQYLLLPFDLGYLRTMSFILVIAVVVQFTEMLVQKTSASLHRALGIYLPLITTNCAVLGVALLNINEKHGFIESAIFGFGAAVGFSLVLILFSAMRERLAAADVPTPFKGGAIAMVTAGLMSLAFMGFTGLVK</sequence>
<comment type="function">
    <text evidence="1">Part of a membrane-bound complex that couples electron transfer with translocation of ions across the membrane.</text>
</comment>
<comment type="subunit">
    <text evidence="1">The complex is composed of six subunits: RnfA, RnfB, RnfC, RnfD, RnfE and RnfG.</text>
</comment>
<comment type="subcellular location">
    <subcellularLocation>
        <location evidence="1">Cell inner membrane</location>
        <topology evidence="1">Multi-pass membrane protein</topology>
    </subcellularLocation>
</comment>
<comment type="similarity">
    <text evidence="1">Belongs to the NqrDE/RnfAE family.</text>
</comment>
<keyword id="KW-0997">Cell inner membrane</keyword>
<keyword id="KW-1003">Cell membrane</keyword>
<keyword id="KW-0249">Electron transport</keyword>
<keyword id="KW-0472">Membrane</keyword>
<keyword id="KW-1185">Reference proteome</keyword>
<keyword id="KW-1278">Translocase</keyword>
<keyword id="KW-0812">Transmembrane</keyword>
<keyword id="KW-1133">Transmembrane helix</keyword>
<keyword id="KW-0813">Transport</keyword>
<gene>
    <name evidence="1" type="primary">rnfA</name>
    <name type="ordered locus">Spea_2353</name>
</gene>
<dbReference type="EC" id="7.-.-.-" evidence="1"/>
<dbReference type="EMBL" id="CP000851">
    <property type="protein sequence ID" value="ABV87673.1"/>
    <property type="molecule type" value="Genomic_DNA"/>
</dbReference>
<dbReference type="SMR" id="A8H536"/>
<dbReference type="STRING" id="398579.Spea_2353"/>
<dbReference type="KEGG" id="spl:Spea_2353"/>
<dbReference type="eggNOG" id="COG4657">
    <property type="taxonomic scope" value="Bacteria"/>
</dbReference>
<dbReference type="HOGENOM" id="CLU_095255_1_0_6"/>
<dbReference type="OrthoDB" id="9803631at2"/>
<dbReference type="Proteomes" id="UP000002608">
    <property type="component" value="Chromosome"/>
</dbReference>
<dbReference type="GO" id="GO:0005886">
    <property type="term" value="C:plasma membrane"/>
    <property type="evidence" value="ECO:0007669"/>
    <property type="project" value="UniProtKB-SubCell"/>
</dbReference>
<dbReference type="GO" id="GO:0022900">
    <property type="term" value="P:electron transport chain"/>
    <property type="evidence" value="ECO:0007669"/>
    <property type="project" value="UniProtKB-UniRule"/>
</dbReference>
<dbReference type="HAMAP" id="MF_00459">
    <property type="entry name" value="RsxA_RnfA"/>
    <property type="match status" value="1"/>
</dbReference>
<dbReference type="InterPro" id="IPR011293">
    <property type="entry name" value="Ion_transpt_RnfA/RsxA"/>
</dbReference>
<dbReference type="InterPro" id="IPR003667">
    <property type="entry name" value="NqrDE/RnfAE"/>
</dbReference>
<dbReference type="InterPro" id="IPR050133">
    <property type="entry name" value="NqrDE/RnfAE_oxidrdctase"/>
</dbReference>
<dbReference type="NCBIfam" id="NF003481">
    <property type="entry name" value="PRK05151.1"/>
    <property type="match status" value="1"/>
</dbReference>
<dbReference type="NCBIfam" id="TIGR01943">
    <property type="entry name" value="rnfA"/>
    <property type="match status" value="1"/>
</dbReference>
<dbReference type="PANTHER" id="PTHR30335">
    <property type="entry name" value="INTEGRAL MEMBRANE PROTEIN OF SOXR-REDUCING COMPLEX"/>
    <property type="match status" value="1"/>
</dbReference>
<dbReference type="PANTHER" id="PTHR30335:SF0">
    <property type="entry name" value="ION-TRANSLOCATING OXIDOREDUCTASE COMPLEX SUBUNIT A"/>
    <property type="match status" value="1"/>
</dbReference>
<dbReference type="Pfam" id="PF02508">
    <property type="entry name" value="Rnf-Nqr"/>
    <property type="match status" value="1"/>
</dbReference>
<dbReference type="PIRSF" id="PIRSF006102">
    <property type="entry name" value="NQR_DE"/>
    <property type="match status" value="1"/>
</dbReference>
<proteinExistence type="inferred from homology"/>
<evidence type="ECO:0000255" key="1">
    <source>
        <dbReference type="HAMAP-Rule" id="MF_00459"/>
    </source>
</evidence>
<protein>
    <recommendedName>
        <fullName evidence="1">Ion-translocating oxidoreductase complex subunit A</fullName>
        <ecNumber evidence="1">7.-.-.-</ecNumber>
    </recommendedName>
    <alternativeName>
        <fullName evidence="1">Rnf electron transport complex subunit A</fullName>
    </alternativeName>
</protein>
<accession>A8H536</accession>
<reference key="1">
    <citation type="submission" date="2007-10" db="EMBL/GenBank/DDBJ databases">
        <title>Complete sequence of Shewanella pealeana ATCC 700345.</title>
        <authorList>
            <consortium name="US DOE Joint Genome Institute"/>
            <person name="Copeland A."/>
            <person name="Lucas S."/>
            <person name="Lapidus A."/>
            <person name="Barry K."/>
            <person name="Glavina del Rio T."/>
            <person name="Dalin E."/>
            <person name="Tice H."/>
            <person name="Pitluck S."/>
            <person name="Chertkov O."/>
            <person name="Brettin T."/>
            <person name="Bruce D."/>
            <person name="Detter J.C."/>
            <person name="Han C."/>
            <person name="Schmutz J."/>
            <person name="Larimer F."/>
            <person name="Land M."/>
            <person name="Hauser L."/>
            <person name="Kyrpides N."/>
            <person name="Kim E."/>
            <person name="Zhao J.-S.Z."/>
            <person name="Manno D."/>
            <person name="Hawari J."/>
            <person name="Richardson P."/>
        </authorList>
    </citation>
    <scope>NUCLEOTIDE SEQUENCE [LARGE SCALE GENOMIC DNA]</scope>
    <source>
        <strain>ATCC 700345 / ANG-SQ1</strain>
    </source>
</reference>
<organism>
    <name type="scientific">Shewanella pealeana (strain ATCC 700345 / ANG-SQ1)</name>
    <dbReference type="NCBI Taxonomy" id="398579"/>
    <lineage>
        <taxon>Bacteria</taxon>
        <taxon>Pseudomonadati</taxon>
        <taxon>Pseudomonadota</taxon>
        <taxon>Gammaproteobacteria</taxon>
        <taxon>Alteromonadales</taxon>
        <taxon>Shewanellaceae</taxon>
        <taxon>Shewanella</taxon>
    </lineage>
</organism>
<name>RNFA_SHEPA</name>
<feature type="chain" id="PRO_1000081135" description="Ion-translocating oxidoreductase complex subunit A">
    <location>
        <begin position="1"/>
        <end position="192"/>
    </location>
</feature>
<feature type="transmembrane region" description="Helical" evidence="1">
    <location>
        <begin position="5"/>
        <end position="25"/>
    </location>
</feature>
<feature type="transmembrane region" description="Helical" evidence="1">
    <location>
        <begin position="39"/>
        <end position="59"/>
    </location>
</feature>
<feature type="transmembrane region" description="Helical" evidence="1">
    <location>
        <begin position="65"/>
        <end position="85"/>
    </location>
</feature>
<feature type="transmembrane region" description="Helical" evidence="1">
    <location>
        <begin position="102"/>
        <end position="122"/>
    </location>
</feature>
<feature type="transmembrane region" description="Helical" evidence="1">
    <location>
        <begin position="134"/>
        <end position="154"/>
    </location>
</feature>
<feature type="transmembrane region" description="Helical" evidence="1">
    <location>
        <begin position="171"/>
        <end position="191"/>
    </location>
</feature>